<gene>
    <name type="primary">MT-CYB</name>
    <name type="synonym">COB</name>
    <name type="synonym">CYTB</name>
    <name type="synonym">MTCYB</name>
</gene>
<comment type="function">
    <text evidence="2">Component of the ubiquinol-cytochrome c reductase complex (complex III or cytochrome b-c1 complex) that is part of the mitochondrial respiratory chain. The b-c1 complex mediates electron transfer from ubiquinol to cytochrome c. Contributes to the generation of a proton gradient across the mitochondrial membrane that is then used for ATP synthesis.</text>
</comment>
<comment type="cofactor">
    <cofactor evidence="2">
        <name>heme b</name>
        <dbReference type="ChEBI" id="CHEBI:60344"/>
    </cofactor>
    <text evidence="2">Binds 2 heme b groups non-covalently.</text>
</comment>
<comment type="subunit">
    <text evidence="2">The cytochrome bc1 complex contains 11 subunits: 3 respiratory subunits (MT-CYB, CYC1 and UQCRFS1), 2 core proteins (UQCRC1 and UQCRC2) and 6 low-molecular weight proteins (UQCRH/QCR6, UQCRB/QCR7, UQCRQ/QCR8, UQCR10/QCR9, UQCR11/QCR10 and a cleavage product of UQCRFS1). This cytochrome bc1 complex then forms a dimer.</text>
</comment>
<comment type="subcellular location">
    <subcellularLocation>
        <location evidence="2">Mitochondrion inner membrane</location>
        <topology evidence="2">Multi-pass membrane protein</topology>
    </subcellularLocation>
</comment>
<comment type="miscellaneous">
    <text evidence="1">Heme 1 (or BL or b562) is low-potential and absorbs at about 562 nm, and heme 2 (or BH or b566) is high-potential and absorbs at about 566 nm.</text>
</comment>
<comment type="similarity">
    <text evidence="3 4">Belongs to the cytochrome b family.</text>
</comment>
<comment type="caution">
    <text evidence="2">The full-length protein contains only eight transmembrane helices, not nine as predicted by bioinformatics tools.</text>
</comment>
<feature type="chain" id="PRO_0000061644" description="Cytochrome b">
    <location>
        <begin position="1"/>
        <end position="379"/>
    </location>
</feature>
<feature type="transmembrane region" description="Helical" evidence="2">
    <location>
        <begin position="33"/>
        <end position="53"/>
    </location>
</feature>
<feature type="transmembrane region" description="Helical" evidence="2">
    <location>
        <begin position="77"/>
        <end position="98"/>
    </location>
</feature>
<feature type="transmembrane region" description="Helical" evidence="2">
    <location>
        <begin position="113"/>
        <end position="133"/>
    </location>
</feature>
<feature type="transmembrane region" description="Helical" evidence="2">
    <location>
        <begin position="178"/>
        <end position="198"/>
    </location>
</feature>
<feature type="transmembrane region" description="Helical" evidence="2">
    <location>
        <begin position="226"/>
        <end position="246"/>
    </location>
</feature>
<feature type="transmembrane region" description="Helical" evidence="2">
    <location>
        <begin position="288"/>
        <end position="308"/>
    </location>
</feature>
<feature type="transmembrane region" description="Helical" evidence="2">
    <location>
        <begin position="320"/>
        <end position="340"/>
    </location>
</feature>
<feature type="transmembrane region" description="Helical" evidence="2">
    <location>
        <begin position="347"/>
        <end position="367"/>
    </location>
</feature>
<feature type="binding site" description="axial binding residue" evidence="2">
    <location>
        <position position="83"/>
    </location>
    <ligand>
        <name>heme b</name>
        <dbReference type="ChEBI" id="CHEBI:60344"/>
        <label>b562</label>
    </ligand>
    <ligandPart>
        <name>Fe</name>
        <dbReference type="ChEBI" id="CHEBI:18248"/>
    </ligandPart>
</feature>
<feature type="binding site" description="axial binding residue" evidence="2">
    <location>
        <position position="97"/>
    </location>
    <ligand>
        <name>heme b</name>
        <dbReference type="ChEBI" id="CHEBI:60344"/>
        <label>b566</label>
    </ligand>
    <ligandPart>
        <name>Fe</name>
        <dbReference type="ChEBI" id="CHEBI:18248"/>
    </ligandPart>
</feature>
<feature type="binding site" description="axial binding residue" evidence="2">
    <location>
        <position position="182"/>
    </location>
    <ligand>
        <name>heme b</name>
        <dbReference type="ChEBI" id="CHEBI:60344"/>
        <label>b562</label>
    </ligand>
    <ligandPart>
        <name>Fe</name>
        <dbReference type="ChEBI" id="CHEBI:18248"/>
    </ligandPart>
</feature>
<feature type="binding site" description="axial binding residue" evidence="2">
    <location>
        <position position="196"/>
    </location>
    <ligand>
        <name>heme b</name>
        <dbReference type="ChEBI" id="CHEBI:60344"/>
        <label>b566</label>
    </ligand>
    <ligandPart>
        <name>Fe</name>
        <dbReference type="ChEBI" id="CHEBI:18248"/>
    </ligandPart>
</feature>
<feature type="binding site" evidence="2">
    <location>
        <position position="201"/>
    </location>
    <ligand>
        <name>a ubiquinone</name>
        <dbReference type="ChEBI" id="CHEBI:16389"/>
    </ligand>
</feature>
<sequence>MTNIRKSHPLIKIINHSFIDLPTPSNISSWWNFGSLLGMCLILQIITGLFLAMHYTSDTTTAFSSVAHICRDVNYGWIIRYLHANGASMFFICLFIHVGRGLYYGSYTFLETWNIGIILLFTVMATAFMGYVLPWGQMSFWGATVITNLLSAIPYIGTNLVEWIWGGFSVDKATLTRFFAFHFILPFIITALVIVHLLFLHETGSNNPSGVSSDMDKIPFHPYYTTKDILGFLVLILMLLILVLFSPELLGDPDNYTPANPLSTPPHIKPEWYFLFAYAILRSIPNKLGGVLALILSILILAIIPMLHTSKQRSMMFRPLSQCVFWLLVADLLTLTWIGGQPVEHPFIIIGQLASILYFSLILVFMPLASAIENNFLKW</sequence>
<name>CYB_TAPTE</name>
<accession>O63699</accession>
<geneLocation type="mitochondrion"/>
<dbReference type="EMBL" id="AF056030">
    <property type="protein sequence ID" value="AAC12771.1"/>
    <property type="molecule type" value="Genomic_DNA"/>
</dbReference>
<dbReference type="SMR" id="O63699"/>
<dbReference type="GO" id="GO:0005743">
    <property type="term" value="C:mitochondrial inner membrane"/>
    <property type="evidence" value="ECO:0007669"/>
    <property type="project" value="UniProtKB-SubCell"/>
</dbReference>
<dbReference type="GO" id="GO:0045275">
    <property type="term" value="C:respiratory chain complex III"/>
    <property type="evidence" value="ECO:0007669"/>
    <property type="project" value="InterPro"/>
</dbReference>
<dbReference type="GO" id="GO:0046872">
    <property type="term" value="F:metal ion binding"/>
    <property type="evidence" value="ECO:0007669"/>
    <property type="project" value="UniProtKB-KW"/>
</dbReference>
<dbReference type="GO" id="GO:0008121">
    <property type="term" value="F:ubiquinol-cytochrome-c reductase activity"/>
    <property type="evidence" value="ECO:0007669"/>
    <property type="project" value="InterPro"/>
</dbReference>
<dbReference type="GO" id="GO:0006122">
    <property type="term" value="P:mitochondrial electron transport, ubiquinol to cytochrome c"/>
    <property type="evidence" value="ECO:0007669"/>
    <property type="project" value="TreeGrafter"/>
</dbReference>
<dbReference type="CDD" id="cd00290">
    <property type="entry name" value="cytochrome_b_C"/>
    <property type="match status" value="1"/>
</dbReference>
<dbReference type="CDD" id="cd00284">
    <property type="entry name" value="Cytochrome_b_N"/>
    <property type="match status" value="1"/>
</dbReference>
<dbReference type="FunFam" id="1.20.810.10:FF:000002">
    <property type="entry name" value="Cytochrome b"/>
    <property type="match status" value="1"/>
</dbReference>
<dbReference type="Gene3D" id="1.20.810.10">
    <property type="entry name" value="Cytochrome Bc1 Complex, Chain C"/>
    <property type="match status" value="1"/>
</dbReference>
<dbReference type="InterPro" id="IPR005798">
    <property type="entry name" value="Cyt_b/b6_C"/>
</dbReference>
<dbReference type="InterPro" id="IPR036150">
    <property type="entry name" value="Cyt_b/b6_C_sf"/>
</dbReference>
<dbReference type="InterPro" id="IPR005797">
    <property type="entry name" value="Cyt_b/b6_N"/>
</dbReference>
<dbReference type="InterPro" id="IPR027387">
    <property type="entry name" value="Cytb/b6-like_sf"/>
</dbReference>
<dbReference type="InterPro" id="IPR030689">
    <property type="entry name" value="Cytochrome_b"/>
</dbReference>
<dbReference type="InterPro" id="IPR048260">
    <property type="entry name" value="Cytochrome_b_C_euk/bac"/>
</dbReference>
<dbReference type="InterPro" id="IPR048259">
    <property type="entry name" value="Cytochrome_b_N_euk/bac"/>
</dbReference>
<dbReference type="InterPro" id="IPR016174">
    <property type="entry name" value="Di-haem_cyt_TM"/>
</dbReference>
<dbReference type="PANTHER" id="PTHR19271">
    <property type="entry name" value="CYTOCHROME B"/>
    <property type="match status" value="1"/>
</dbReference>
<dbReference type="PANTHER" id="PTHR19271:SF16">
    <property type="entry name" value="CYTOCHROME B"/>
    <property type="match status" value="1"/>
</dbReference>
<dbReference type="Pfam" id="PF00032">
    <property type="entry name" value="Cytochrom_B_C"/>
    <property type="match status" value="1"/>
</dbReference>
<dbReference type="Pfam" id="PF00033">
    <property type="entry name" value="Cytochrome_B"/>
    <property type="match status" value="1"/>
</dbReference>
<dbReference type="PIRSF" id="PIRSF038885">
    <property type="entry name" value="COB"/>
    <property type="match status" value="1"/>
</dbReference>
<dbReference type="SUPFAM" id="SSF81648">
    <property type="entry name" value="a domain/subunit of cytochrome bc1 complex (Ubiquinol-cytochrome c reductase)"/>
    <property type="match status" value="1"/>
</dbReference>
<dbReference type="SUPFAM" id="SSF81342">
    <property type="entry name" value="Transmembrane di-heme cytochromes"/>
    <property type="match status" value="1"/>
</dbReference>
<dbReference type="PROSITE" id="PS51003">
    <property type="entry name" value="CYTB_CTER"/>
    <property type="match status" value="1"/>
</dbReference>
<dbReference type="PROSITE" id="PS51002">
    <property type="entry name" value="CYTB_NTER"/>
    <property type="match status" value="1"/>
</dbReference>
<evidence type="ECO:0000250" key="1"/>
<evidence type="ECO:0000250" key="2">
    <source>
        <dbReference type="UniProtKB" id="P00157"/>
    </source>
</evidence>
<evidence type="ECO:0000255" key="3">
    <source>
        <dbReference type="PROSITE-ProRule" id="PRU00967"/>
    </source>
</evidence>
<evidence type="ECO:0000255" key="4">
    <source>
        <dbReference type="PROSITE-ProRule" id="PRU00968"/>
    </source>
</evidence>
<proteinExistence type="inferred from homology"/>
<organism>
    <name type="scientific">Tapirus terrestris</name>
    <name type="common">Lowland tapir</name>
    <name type="synonym">Brazilian tapir</name>
    <dbReference type="NCBI Taxonomy" id="9801"/>
    <lineage>
        <taxon>Eukaryota</taxon>
        <taxon>Metazoa</taxon>
        <taxon>Chordata</taxon>
        <taxon>Craniata</taxon>
        <taxon>Vertebrata</taxon>
        <taxon>Euteleostomi</taxon>
        <taxon>Mammalia</taxon>
        <taxon>Eutheria</taxon>
        <taxon>Laurasiatheria</taxon>
        <taxon>Perissodactyla</taxon>
        <taxon>Tapiridae</taxon>
        <taxon>Tapirus</taxon>
    </lineage>
</organism>
<keyword id="KW-0249">Electron transport</keyword>
<keyword id="KW-0349">Heme</keyword>
<keyword id="KW-0408">Iron</keyword>
<keyword id="KW-0472">Membrane</keyword>
<keyword id="KW-0479">Metal-binding</keyword>
<keyword id="KW-0496">Mitochondrion</keyword>
<keyword id="KW-0999">Mitochondrion inner membrane</keyword>
<keyword id="KW-0679">Respiratory chain</keyword>
<keyword id="KW-0812">Transmembrane</keyword>
<keyword id="KW-1133">Transmembrane helix</keyword>
<keyword id="KW-0813">Transport</keyword>
<keyword id="KW-0830">Ubiquinone</keyword>
<reference key="1">
    <citation type="submission" date="1998-03" db="EMBL/GenBank/DDBJ databases">
        <title>Evolution of the order Perissodactyla.</title>
        <authorList>
            <person name="Veits J."/>
            <person name="Pitra C."/>
        </authorList>
    </citation>
    <scope>NUCLEOTIDE SEQUENCE [GENOMIC DNA]</scope>
</reference>
<protein>
    <recommendedName>
        <fullName>Cytochrome b</fullName>
    </recommendedName>
    <alternativeName>
        <fullName>Complex III subunit 3</fullName>
    </alternativeName>
    <alternativeName>
        <fullName>Complex III subunit III</fullName>
    </alternativeName>
    <alternativeName>
        <fullName>Cytochrome b-c1 complex subunit 3</fullName>
    </alternativeName>
    <alternativeName>
        <fullName>Ubiquinol-cytochrome-c reductase complex cytochrome b subunit</fullName>
    </alternativeName>
</protein>